<feature type="chain" id="PRO_0000188950" description="tRNA modification GTPase MnmE">
    <location>
        <begin position="1"/>
        <end position="451"/>
    </location>
</feature>
<feature type="domain" description="TrmE-type G">
    <location>
        <begin position="220"/>
        <end position="373"/>
    </location>
</feature>
<feature type="binding site" evidence="1">
    <location>
        <position position="28"/>
    </location>
    <ligand>
        <name>(6S)-5-formyl-5,6,7,8-tetrahydrofolate</name>
        <dbReference type="ChEBI" id="CHEBI:57457"/>
    </ligand>
</feature>
<feature type="binding site" evidence="1">
    <location>
        <position position="85"/>
    </location>
    <ligand>
        <name>(6S)-5-formyl-5,6,7,8-tetrahydrofolate</name>
        <dbReference type="ChEBI" id="CHEBI:57457"/>
    </ligand>
</feature>
<feature type="binding site" evidence="1">
    <location>
        <position position="124"/>
    </location>
    <ligand>
        <name>(6S)-5-formyl-5,6,7,8-tetrahydrofolate</name>
        <dbReference type="ChEBI" id="CHEBI:57457"/>
    </ligand>
</feature>
<feature type="binding site" evidence="1">
    <location>
        <begin position="230"/>
        <end position="235"/>
    </location>
    <ligand>
        <name>GTP</name>
        <dbReference type="ChEBI" id="CHEBI:37565"/>
    </ligand>
</feature>
<feature type="binding site" evidence="1">
    <location>
        <position position="230"/>
    </location>
    <ligand>
        <name>K(+)</name>
        <dbReference type="ChEBI" id="CHEBI:29103"/>
    </ligand>
</feature>
<feature type="binding site" evidence="1">
    <location>
        <position position="234"/>
    </location>
    <ligand>
        <name>Mg(2+)</name>
        <dbReference type="ChEBI" id="CHEBI:18420"/>
    </ligand>
</feature>
<feature type="binding site" evidence="1">
    <location>
        <begin position="249"/>
        <end position="255"/>
    </location>
    <ligand>
        <name>GTP</name>
        <dbReference type="ChEBI" id="CHEBI:37565"/>
    </ligand>
</feature>
<feature type="binding site" evidence="1">
    <location>
        <position position="249"/>
    </location>
    <ligand>
        <name>K(+)</name>
        <dbReference type="ChEBI" id="CHEBI:29103"/>
    </ligand>
</feature>
<feature type="binding site" evidence="1">
    <location>
        <position position="251"/>
    </location>
    <ligand>
        <name>K(+)</name>
        <dbReference type="ChEBI" id="CHEBI:29103"/>
    </ligand>
</feature>
<feature type="binding site" evidence="1">
    <location>
        <position position="254"/>
    </location>
    <ligand>
        <name>K(+)</name>
        <dbReference type="ChEBI" id="CHEBI:29103"/>
    </ligand>
</feature>
<feature type="binding site" evidence="1">
    <location>
        <position position="255"/>
    </location>
    <ligand>
        <name>Mg(2+)</name>
        <dbReference type="ChEBI" id="CHEBI:18420"/>
    </ligand>
</feature>
<feature type="binding site" evidence="1">
    <location>
        <begin position="274"/>
        <end position="277"/>
    </location>
    <ligand>
        <name>GTP</name>
        <dbReference type="ChEBI" id="CHEBI:37565"/>
    </ligand>
</feature>
<feature type="binding site" evidence="1">
    <location>
        <position position="451"/>
    </location>
    <ligand>
        <name>(6S)-5-formyl-5,6,7,8-tetrahydrofolate</name>
        <dbReference type="ChEBI" id="CHEBI:57457"/>
    </ligand>
</feature>
<protein>
    <recommendedName>
        <fullName evidence="1">tRNA modification GTPase MnmE</fullName>
        <ecNumber evidence="1">3.6.-.-</ecNumber>
    </recommendedName>
</protein>
<comment type="function">
    <text evidence="1">Exhibits a very high intrinsic GTPase hydrolysis rate. Involved in the addition of a carboxymethylaminomethyl (cmnm) group at the wobble position (U34) of certain tRNAs, forming tRNA-cmnm(5)s(2)U34.</text>
</comment>
<comment type="cofactor">
    <cofactor evidence="1">
        <name>K(+)</name>
        <dbReference type="ChEBI" id="CHEBI:29103"/>
    </cofactor>
    <text evidence="1">Binds 1 potassium ion per subunit.</text>
</comment>
<comment type="subunit">
    <text evidence="1">Homodimer. Heterotetramer of two MnmE and two MnmG subunits.</text>
</comment>
<comment type="subcellular location">
    <subcellularLocation>
        <location evidence="1">Cytoplasm</location>
    </subcellularLocation>
</comment>
<comment type="similarity">
    <text evidence="1">Belongs to the TRAFAC class TrmE-Era-EngA-EngB-Septin-like GTPase superfamily. TrmE GTPase family.</text>
</comment>
<sequence length="451" mass="49090">MSQRSTKMGDTIAAIATASGAAGIGIIRLSGSLIKTIATGLGMTTLRPRYAHYTRFLDVQDEVIDDGLALWFPAPHSFTGEDVLELQGHGSPLLLRQLLTRCLDLGARQAHPGEFSERAFLNGKLDLIQAEAIADMIGAADLRAARAARRSLDGVFSRRCEALAQQLIRLRIHVEATIDFAEESLDTLDRAQIRTSLQTLNVELTQLLRDAEHGKRLCDGLYTVLVGPPNVGKSSLLNALIGSDRAIVTDVPGTTRDTLRESVHFHGLEFVLVDTAGLREEGDAIEREGMRRTLNELQRADLALVVLDACDPQIGSLALADALTSVPRVLWIHNKLDLLTEPPSALDTDVIPVSAMTGAGLETLKTRLRTLLLGETVETIEGEFSARLRHVQALQRTAAHVTDANAQFAYEHLELTAEELRLAYKALGEINGSMSPDELLGRIFSNFCIGK</sequence>
<keyword id="KW-0963">Cytoplasm</keyword>
<keyword id="KW-0342">GTP-binding</keyword>
<keyword id="KW-0378">Hydrolase</keyword>
<keyword id="KW-0460">Magnesium</keyword>
<keyword id="KW-0479">Metal-binding</keyword>
<keyword id="KW-0547">Nucleotide-binding</keyword>
<keyword id="KW-0630">Potassium</keyword>
<keyword id="KW-0819">tRNA processing</keyword>
<gene>
    <name evidence="1" type="primary">mnmE</name>
    <name evidence="1" type="synonym">trmE</name>
    <name type="ordered locus">XF_2778</name>
</gene>
<dbReference type="EC" id="3.6.-.-" evidence="1"/>
<dbReference type="EMBL" id="AE003849">
    <property type="protein sequence ID" value="AAF85563.1"/>
    <property type="molecule type" value="Genomic_DNA"/>
</dbReference>
<dbReference type="PIR" id="F82516">
    <property type="entry name" value="F82516"/>
</dbReference>
<dbReference type="RefSeq" id="WP_010895192.1">
    <property type="nucleotide sequence ID" value="NC_002488.3"/>
</dbReference>
<dbReference type="SMR" id="Q9P9U3"/>
<dbReference type="STRING" id="160492.XF_2778"/>
<dbReference type="KEGG" id="xfa:XF_2778"/>
<dbReference type="eggNOG" id="COG0486">
    <property type="taxonomic scope" value="Bacteria"/>
</dbReference>
<dbReference type="HOGENOM" id="CLU_019624_4_1_6"/>
<dbReference type="Proteomes" id="UP000000812">
    <property type="component" value="Chromosome"/>
</dbReference>
<dbReference type="GO" id="GO:0005829">
    <property type="term" value="C:cytosol"/>
    <property type="evidence" value="ECO:0007669"/>
    <property type="project" value="TreeGrafter"/>
</dbReference>
<dbReference type="GO" id="GO:0005525">
    <property type="term" value="F:GTP binding"/>
    <property type="evidence" value="ECO:0007669"/>
    <property type="project" value="UniProtKB-UniRule"/>
</dbReference>
<dbReference type="GO" id="GO:0003924">
    <property type="term" value="F:GTPase activity"/>
    <property type="evidence" value="ECO:0007669"/>
    <property type="project" value="UniProtKB-UniRule"/>
</dbReference>
<dbReference type="GO" id="GO:0046872">
    <property type="term" value="F:metal ion binding"/>
    <property type="evidence" value="ECO:0007669"/>
    <property type="project" value="UniProtKB-KW"/>
</dbReference>
<dbReference type="GO" id="GO:0030488">
    <property type="term" value="P:tRNA methylation"/>
    <property type="evidence" value="ECO:0007669"/>
    <property type="project" value="TreeGrafter"/>
</dbReference>
<dbReference type="GO" id="GO:0002098">
    <property type="term" value="P:tRNA wobble uridine modification"/>
    <property type="evidence" value="ECO:0007669"/>
    <property type="project" value="TreeGrafter"/>
</dbReference>
<dbReference type="CDD" id="cd04164">
    <property type="entry name" value="trmE"/>
    <property type="match status" value="1"/>
</dbReference>
<dbReference type="CDD" id="cd14858">
    <property type="entry name" value="TrmE_N"/>
    <property type="match status" value="1"/>
</dbReference>
<dbReference type="FunFam" id="3.40.50.300:FF:001376">
    <property type="entry name" value="tRNA modification GTPase MnmE"/>
    <property type="match status" value="1"/>
</dbReference>
<dbReference type="Gene3D" id="3.40.50.300">
    <property type="entry name" value="P-loop containing nucleotide triphosphate hydrolases"/>
    <property type="match status" value="1"/>
</dbReference>
<dbReference type="Gene3D" id="3.30.1360.120">
    <property type="entry name" value="Probable tRNA modification gtpase trme, domain 1"/>
    <property type="match status" value="1"/>
</dbReference>
<dbReference type="Gene3D" id="1.20.120.430">
    <property type="entry name" value="tRNA modification GTPase MnmE domain 2"/>
    <property type="match status" value="1"/>
</dbReference>
<dbReference type="HAMAP" id="MF_00379">
    <property type="entry name" value="GTPase_MnmE"/>
    <property type="match status" value="1"/>
</dbReference>
<dbReference type="InterPro" id="IPR031168">
    <property type="entry name" value="G_TrmE"/>
</dbReference>
<dbReference type="InterPro" id="IPR006073">
    <property type="entry name" value="GTP-bd"/>
</dbReference>
<dbReference type="InterPro" id="IPR018948">
    <property type="entry name" value="GTP-bd_TrmE_N"/>
</dbReference>
<dbReference type="InterPro" id="IPR004520">
    <property type="entry name" value="GTPase_MnmE"/>
</dbReference>
<dbReference type="InterPro" id="IPR027368">
    <property type="entry name" value="MnmE_dom2"/>
</dbReference>
<dbReference type="InterPro" id="IPR025867">
    <property type="entry name" value="MnmE_helical"/>
</dbReference>
<dbReference type="InterPro" id="IPR027417">
    <property type="entry name" value="P-loop_NTPase"/>
</dbReference>
<dbReference type="InterPro" id="IPR005225">
    <property type="entry name" value="Small_GTP-bd"/>
</dbReference>
<dbReference type="InterPro" id="IPR027266">
    <property type="entry name" value="TrmE/GcvT_dom1"/>
</dbReference>
<dbReference type="NCBIfam" id="TIGR00450">
    <property type="entry name" value="mnmE_trmE_thdF"/>
    <property type="match status" value="1"/>
</dbReference>
<dbReference type="NCBIfam" id="NF003661">
    <property type="entry name" value="PRK05291.1-3"/>
    <property type="match status" value="1"/>
</dbReference>
<dbReference type="NCBIfam" id="TIGR00231">
    <property type="entry name" value="small_GTP"/>
    <property type="match status" value="1"/>
</dbReference>
<dbReference type="PANTHER" id="PTHR42714">
    <property type="entry name" value="TRNA MODIFICATION GTPASE GTPBP3"/>
    <property type="match status" value="1"/>
</dbReference>
<dbReference type="PANTHER" id="PTHR42714:SF2">
    <property type="entry name" value="TRNA MODIFICATION GTPASE GTPBP3, MITOCHONDRIAL"/>
    <property type="match status" value="1"/>
</dbReference>
<dbReference type="Pfam" id="PF01926">
    <property type="entry name" value="MMR_HSR1"/>
    <property type="match status" value="1"/>
</dbReference>
<dbReference type="Pfam" id="PF12631">
    <property type="entry name" value="MnmE_helical"/>
    <property type="match status" value="1"/>
</dbReference>
<dbReference type="Pfam" id="PF10396">
    <property type="entry name" value="TrmE_N"/>
    <property type="match status" value="1"/>
</dbReference>
<dbReference type="PRINTS" id="PR00326">
    <property type="entry name" value="GTP1OBG"/>
</dbReference>
<dbReference type="SUPFAM" id="SSF52540">
    <property type="entry name" value="P-loop containing nucleoside triphosphate hydrolases"/>
    <property type="match status" value="1"/>
</dbReference>
<dbReference type="SUPFAM" id="SSF116878">
    <property type="entry name" value="TrmE connector domain"/>
    <property type="match status" value="1"/>
</dbReference>
<dbReference type="PROSITE" id="PS51709">
    <property type="entry name" value="G_TRME"/>
    <property type="match status" value="1"/>
</dbReference>
<accession>Q9P9U3</accession>
<proteinExistence type="inferred from homology"/>
<organism>
    <name type="scientific">Xylella fastidiosa (strain 9a5c)</name>
    <dbReference type="NCBI Taxonomy" id="160492"/>
    <lineage>
        <taxon>Bacteria</taxon>
        <taxon>Pseudomonadati</taxon>
        <taxon>Pseudomonadota</taxon>
        <taxon>Gammaproteobacteria</taxon>
        <taxon>Lysobacterales</taxon>
        <taxon>Lysobacteraceae</taxon>
        <taxon>Xylella</taxon>
    </lineage>
</organism>
<reference key="1">
    <citation type="journal article" date="2000" name="Nature">
        <title>The genome sequence of the plant pathogen Xylella fastidiosa.</title>
        <authorList>
            <person name="Simpson A.J.G."/>
            <person name="Reinach F.C."/>
            <person name="Arruda P."/>
            <person name="Abreu F.A."/>
            <person name="Acencio M."/>
            <person name="Alvarenga R."/>
            <person name="Alves L.M.C."/>
            <person name="Araya J.E."/>
            <person name="Baia G.S."/>
            <person name="Baptista C.S."/>
            <person name="Barros M.H."/>
            <person name="Bonaccorsi E.D."/>
            <person name="Bordin S."/>
            <person name="Bove J.M."/>
            <person name="Briones M.R.S."/>
            <person name="Bueno M.R.P."/>
            <person name="Camargo A.A."/>
            <person name="Camargo L.E.A."/>
            <person name="Carraro D.M."/>
            <person name="Carrer H."/>
            <person name="Colauto N.B."/>
            <person name="Colombo C."/>
            <person name="Costa F.F."/>
            <person name="Costa M.C.R."/>
            <person name="Costa-Neto C.M."/>
            <person name="Coutinho L.L."/>
            <person name="Cristofani M."/>
            <person name="Dias-Neto E."/>
            <person name="Docena C."/>
            <person name="El-Dorry H."/>
            <person name="Facincani A.P."/>
            <person name="Ferreira A.J.S."/>
            <person name="Ferreira V.C.A."/>
            <person name="Ferro J.A."/>
            <person name="Fraga J.S."/>
            <person name="Franca S.C."/>
            <person name="Franco M.C."/>
            <person name="Frohme M."/>
            <person name="Furlan L.R."/>
            <person name="Garnier M."/>
            <person name="Goldman G.H."/>
            <person name="Goldman M.H.S."/>
            <person name="Gomes S.L."/>
            <person name="Gruber A."/>
            <person name="Ho P.L."/>
            <person name="Hoheisel J.D."/>
            <person name="Junqueira M.L."/>
            <person name="Kemper E.L."/>
            <person name="Kitajima J.P."/>
            <person name="Krieger J.E."/>
            <person name="Kuramae E.E."/>
            <person name="Laigret F."/>
            <person name="Lambais M.R."/>
            <person name="Leite L.C.C."/>
            <person name="Lemos E.G.M."/>
            <person name="Lemos M.V.F."/>
            <person name="Lopes S.A."/>
            <person name="Lopes C.R."/>
            <person name="Machado J.A."/>
            <person name="Machado M.A."/>
            <person name="Madeira A.M.B.N."/>
            <person name="Madeira H.M.F."/>
            <person name="Marino C.L."/>
            <person name="Marques M.V."/>
            <person name="Martins E.A.L."/>
            <person name="Martins E.M.F."/>
            <person name="Matsukuma A.Y."/>
            <person name="Menck C.F.M."/>
            <person name="Miracca E.C."/>
            <person name="Miyaki C.Y."/>
            <person name="Monteiro-Vitorello C.B."/>
            <person name="Moon D.H."/>
            <person name="Nagai M.A."/>
            <person name="Nascimento A.L.T.O."/>
            <person name="Netto L.E.S."/>
            <person name="Nhani A. Jr."/>
            <person name="Nobrega F.G."/>
            <person name="Nunes L.R."/>
            <person name="Oliveira M.A."/>
            <person name="de Oliveira M.C."/>
            <person name="de Oliveira R.C."/>
            <person name="Palmieri D.A."/>
            <person name="Paris A."/>
            <person name="Peixoto B.R."/>
            <person name="Pereira G.A.G."/>
            <person name="Pereira H.A. Jr."/>
            <person name="Pesquero J.B."/>
            <person name="Quaggio R.B."/>
            <person name="Roberto P.G."/>
            <person name="Rodrigues V."/>
            <person name="de Rosa A.J.M."/>
            <person name="de Rosa V.E. Jr."/>
            <person name="de Sa R.G."/>
            <person name="Santelli R.V."/>
            <person name="Sawasaki H.E."/>
            <person name="da Silva A.C.R."/>
            <person name="da Silva A.M."/>
            <person name="da Silva F.R."/>
            <person name="Silva W.A. Jr."/>
            <person name="da Silveira J.F."/>
            <person name="Silvestri M.L.Z."/>
            <person name="Siqueira W.J."/>
            <person name="de Souza A.A."/>
            <person name="de Souza A.P."/>
            <person name="Terenzi M.F."/>
            <person name="Truffi D."/>
            <person name="Tsai S.M."/>
            <person name="Tsuhako M.H."/>
            <person name="Vallada H."/>
            <person name="Van Sluys M.A."/>
            <person name="Verjovski-Almeida S."/>
            <person name="Vettore A.L."/>
            <person name="Zago M.A."/>
            <person name="Zatz M."/>
            <person name="Meidanis J."/>
            <person name="Setubal J.C."/>
        </authorList>
    </citation>
    <scope>NUCLEOTIDE SEQUENCE [LARGE SCALE GENOMIC DNA]</scope>
    <source>
        <strain>9a5c</strain>
    </source>
</reference>
<evidence type="ECO:0000255" key="1">
    <source>
        <dbReference type="HAMAP-Rule" id="MF_00379"/>
    </source>
</evidence>
<name>MNME_XYLFA</name>